<keyword id="KW-0175">Coiled coil</keyword>
<keyword id="KW-0963">Cytoplasm</keyword>
<keyword id="KW-1185">Reference proteome</keyword>
<keyword id="KW-0677">Repeat</keyword>
<evidence type="ECO:0000255" key="1"/>
<evidence type="ECO:0000255" key="2">
    <source>
        <dbReference type="PROSITE-ProRule" id="PRU00647"/>
    </source>
</evidence>
<evidence type="ECO:0000256" key="3">
    <source>
        <dbReference type="SAM" id="MobiDB-lite"/>
    </source>
</evidence>
<evidence type="ECO:0000305" key="4"/>
<evidence type="ECO:0000312" key="5">
    <source>
        <dbReference type="HGNC" id="HGNC:31992"/>
    </source>
</evidence>
<protein>
    <recommendedName>
        <fullName evidence="4">NBPF family member NBPF10</fullName>
    </recommendedName>
    <alternativeName>
        <fullName evidence="4">Neuroblastoma breakpoint family member 10</fullName>
    </alternativeName>
</protein>
<name>NBPFA_HUMAN</name>
<sequence>MVVSAGPWSSEKAEMNILEINETLRPQLAEKKQQFRSLKEKCFLTQLAGFLANRQKKYKYEECKDLIKFMLRNERQFKEEKLAEQLKQAEELRQYKVLVHSQERELTQLREKLREGRDASRSLYEHLQALLTPDEPDKSQGQDLQEQLAEGCRLAQHLVQKLSPENDEDEDEDVQVEEAEKVLESSAPREVQKAEESKVPEDSLEECAITCSNSHGPCDSNQPHKNIKITFEEDEVNSTLVVDRESSHDECQDALNILPVPGPTSSATNVSMVVSAGPLSSEKAEMNILEINEKLRPQLAEKKQQFRNLKEKCFLTQLSGFLANQQKKYKYEECKDLIKFMLRNERQFKEEKLAEQLKQAEELRQYKVLVHAQERELTQLKEKLREGRDASRSLNEHLQALLTPYEPDKSQGQDLQEQLAEGCRLAQHLVQKLSPENDNDDDEDVQVEVAEKVQKSSAPREMQKAEEKEVPEDSLEECAITYSNSHGSYDSNQPHRKTKITFEEDKVDSTLIGSSSHVEWEDAVHIIPENESDDEEEEEKGPVSPRNLQESEEEEVPQESWDEGYSTLSIPPEMLASYQSYSSTFHSLEEQQVCMAVDIGRHRWDQVKKEDQEATGPRLSRELLDEKGPEVLQDSQDRCYSTPSGCLELTDSCQPYRSAFYILEQQRVGLAIDMDEIEKYQEVEEDQDPSCPRLSRELLDEKEPEVLQDSLDRCYSTPSGYLELPDLGQPYSSAVYSLEEQYLGLALDVDRIKKDQEEEEDQGPPCPRLSRELLEVVEPEVLQDSLDRCYSTPSSCLEQPDSCQPYGSSFYALEEKHVGFSLDVGEIEKKGKGKKRRGRRSKKERRRGRKEGEEDQNPPCPRLSRELLDEKGPEVLQDSLDRCYSTPSGCLELTDSCQPYRSAFYVLEQQRVGFAFDMDEIEKYQEVEEDQDPSCPRLSRELLDEKEPEVLQDSLDRCYSTPSGYLELPDLGQPYSSAVYSLEEQYLGLALDVDRIKKDEEEEEDQDPPCPRLSRELLEVVEPEVLQDSLDRCYSTPSSCLEQPDSCQPYGSSFYALEENHVGFSLDVGEIEKKGKGKKRRGRRSKKERRRGRKEGEEDQNPPCPRLSRELLEEKGPEVLQDSLDRCYSTPSGCLELTDSCQPYRSAFYVLEQQRVGFAVDMDEIEKYQEVEEDQDPSCPRLSRELLDEKEPEVLQDSLDRCYSTPSGYLELPDLGQPYSSAVYSLEEQYLGLALDVDRIKKDEEEEEDQDPPCPRLSRELLEVVEPEVLQDSLDRCYSTPSSCLEQPDSCQPYGSSFYALEEKHVGFSLDVGEIEKKGKGKKRRGRRSKKERRRGRKEGEEDQNPPCPRLSRELLEEKGPEVLQDSLDRCYSTPSGCLELTDSCQPYRSAFYVLEQQRVGFAVDMDEIEKYQEVEEDQDPSCPRLSRELLDEKEPEVLQDSLDRCYSTPSGYLELPDLGQPYSSAVYSLEEQYLGLALDVDRIKKDEEEEEDQDPPCPRLSRELLEVVEPEVLQDSLDRCYSTPSSCLEQPDSCQPYGSSFYALEEKHVGFSLDVGEIEKKGKGKKRRGRRSKKERRRGRKEGEEDQNPPCPRLSRELLDEKGPEVLQDSLDRCYSTPSGCLELTDSCQPYRSAFYVLEQQHVGLAVDMDEIEKYQEVEEDQDPSCPRLSRELLDEKEPEVLQDSLDRCYSTPSGYLELPDLGQPYSSAVYSLEEQYLGLALDVDRIKKDQEEEEDQGPPCPRLSRELLEVVEPEVLQDSLDRCYSTPSSCLEQPDSCQPYGSSFYALEEKHVGFSLDVGEIEKKGKGKKRRGRRSKKERRRGRKEGEEDQNPPCPRLSRELLDEKGPEVLQDSLDRCYSTPSGCLELTDSCQPYRSAFYVLEQQHVGLAVDMDEIEKYQEVEEDQDPSCPRLSRELLDEKEPEVLQDSLDRCYSTPSGYLELPDLGQPYSSAVYSLEEQYLGLALDVDRIKKDQEEEEDQGPPCPRLSRELLEVVEPEVLQDSLDRCYSTPSSCLEQPDSCQPYGSSFYALEEKHVGFSLDVGEIEKKGKGKKRRGRRSKKERRRGRKEGEEDQNPPCPRLSRELLDEKGPEVLQDSLDRCYSTPSGCLELTDSCQPYRSAFYVLEQQHVGLAVDMDEIEKYQEVEEDQDPSCPRLSRELLDEKEPEVLQDSLDRCYSTPSGYLELPDLGQPYSSAVYSLEEQYLGLALDVDRIKKDQEEEEDQGPPCPRLSRELLEVVEPEVLQDSLDRCYSTPSSCLEQPDSCQPYGSSFYALEEKHVGFSLDVGEIEKKGKGKKRRGRRSKKERRRGRKEGEEDQNPPCPRLSRELLDEKGPEVLQDSLDRCYSTPSGCLELTDSCQPYRSAFYVLEQQHVGLAVDMDEIEKYQEVEEDQDPSCPRLSRELLDEKEPEVLQDSLDRCYSTPSGYLELPDLGQPYSSAVYSLEEQYLGLALDVDRIKKDQEEEEDQDPPCPRLSRELLEVVEPEVLQDSLDRCYSTPSSCLEQPDSCQPYGSSFYALEEKHVGFSLDVGEIEKKGKGKKRRGRRSKKERRRGRKEGEEDQNPPCPRLSRELLDEKGPEVLQDSLDRCYSTPSGCLELTDSCQPYRSAFYVLEQQHVGLAVDMDEIEKYQEVEEDQDPSCPRLSRELLDEKEPEVLQDSLDRCYSTPSGYLELPDLGQPYSSAVYSLEEQYLGLALDVDRIKKDQEEEEDQGPPCPRLSRELLEVVEPEVLQDSLDRCYSTPSSCLEQPDSCQPYGSSFYALEEKHVGFSLDVGEIEKKGKGKKRRGRRSKKERRRGRKEGEEDQNPPCPRLSRELLDEKGPEVLQDSLDRCYSTPSGCLELTDSCQPYRSAFYVLEQQHVGLAVDMDEIEKYQEVEEDQDPSCPRLSRELLDEKEPEVLQDSLDRCYSTPSGYLELPDLGQPYSSAVYSLEEQYLGLALDVDRIKKDQEEEEDQGPPCPRLSRELLEVVEPEVLQDSLDRCYSTPSSCLEQPDSCQPYGSSFYALEEKHVGFSLDVGEIEKKGKGKKRRGRRSKKERRRGRKEGEEDQNPPCPRLSRELLDEKGPEVLQDSLDRCYSTPSGCLELTDSCQPYRSAFYVLEQQHVGLAVDMDEIEKYQEVEEDQDPSCPRLSRELLDEKEPEVLQDSLDRCYSTPSGYLELPDLGQPYSSAVYSLEEQYLGLALDVDRIKKDEEEEEDQDPPCPRLSRELLEVVEPEVLQDSLDRCYSTPSSCLEQPDSCQPYGSSFYALEEKHVGFSLDVGEIEKKGKGKKRRGRRSKKERRRGRKEGEEDQNPPCPRLSRELLDEKGPEVLQDSLDRCYSTPSGYLELTDSCQPYRSAFYVLEQQHVGLAVDMDEIEKYQEVEEDQDPSCPRLSRELLDEKEPEVLQDSLDRCYSTPSGYLELPDLGQPYSSAVYSLEEQYLGLALDVDRIKKDQEEEEDQGPPCPRLSRELLEVVEPEVLQDSLDRCYSTPSSCLEQPDSCQPYGSSFYALEEKHVGFSLDVGEIEKKGKGKKRRGRRSKKERRRGRKEGEEDQNPPCPRLSRELLDEKGPEVLQDSLDRCYSTPSGCLELCDSCQPYRSAFYVLEQQRVGLAVDMDEIEKYQEVEEDQDPSCPRLSRELLDEKEPEVLQDSLDRCYSTPSGYLELPDLGQPYSSAVYSLEEQYLGLALDVDKIEKKGKGKKRRGRRSKKERRRGRKEGEEDQNPPCPRLNGVLMEVEEREVLQDSLDRCYSTPSMYFELPDSFQHYRSVFYSFEEQHISFALYVDNRFFTLTVTSLHLVFQMGVIFPQ</sequence>
<proteinExistence type="inferred from homology"/>
<feature type="chain" id="PRO_0000288045" description="NBPF family member NBPF10">
    <location>
        <begin position="1"/>
        <end position="3795"/>
    </location>
</feature>
<feature type="domain" description="Olduvai 1" evidence="2">
    <location>
        <begin position="165"/>
        <end position="259"/>
    </location>
</feature>
<feature type="domain" description="Olduvai 2" evidence="2">
    <location>
        <begin position="436"/>
        <end position="528"/>
    </location>
</feature>
<feature type="domain" description="Olduvai 3" evidence="2">
    <location>
        <begin position="529"/>
        <end position="600"/>
    </location>
</feature>
<feature type="domain" description="Olduvai 4" evidence="2">
    <location>
        <begin position="601"/>
        <end position="692"/>
    </location>
</feature>
<feature type="domain" description="Olduvai 5" evidence="2">
    <location>
        <begin position="695"/>
        <end position="750"/>
    </location>
</feature>
<feature type="domain" description="Olduvai 6" evidence="2">
    <location>
        <begin position="751"/>
        <end position="843"/>
    </location>
</feature>
<feature type="domain" description="Olduvai 7" evidence="2">
    <location>
        <begin position="844"/>
        <end position="936"/>
    </location>
</feature>
<feature type="domain" description="Olduvai 8" evidence="2">
    <location>
        <begin position="939"/>
        <end position="994"/>
    </location>
</feature>
<feature type="domain" description="Olduvai 9" evidence="2">
    <location>
        <begin position="995"/>
        <end position="1087"/>
    </location>
</feature>
<feature type="domain" description="Olduvai 10" evidence="2">
    <location>
        <begin position="1088"/>
        <end position="1180"/>
    </location>
</feature>
<feature type="domain" description="Olduvai 11" evidence="2">
    <location>
        <begin position="1183"/>
        <end position="1238"/>
    </location>
</feature>
<feature type="domain" description="Olduvai 12" evidence="2">
    <location>
        <begin position="1239"/>
        <end position="1331"/>
    </location>
</feature>
<feature type="domain" description="Olduvai 13" evidence="2">
    <location>
        <begin position="1332"/>
        <end position="1424"/>
    </location>
</feature>
<feature type="domain" description="Olduvai 14" evidence="2">
    <location>
        <begin position="1427"/>
        <end position="1482"/>
    </location>
</feature>
<feature type="domain" description="Olduvai 15" evidence="2">
    <location>
        <begin position="1483"/>
        <end position="1575"/>
    </location>
</feature>
<feature type="domain" description="Olduvai 16" evidence="2">
    <location>
        <begin position="1576"/>
        <end position="1668"/>
    </location>
</feature>
<feature type="domain" description="Olduvai 17" evidence="2">
    <location>
        <begin position="1671"/>
        <end position="1726"/>
    </location>
</feature>
<feature type="domain" description="Olduvai 18" evidence="2">
    <location>
        <begin position="1727"/>
        <end position="1819"/>
    </location>
</feature>
<feature type="domain" description="Olduvai 19" evidence="2">
    <location>
        <begin position="1820"/>
        <end position="1912"/>
    </location>
</feature>
<feature type="domain" description="Olduvai 20" evidence="2">
    <location>
        <begin position="1915"/>
        <end position="1970"/>
    </location>
</feature>
<feature type="domain" description="Olduvai 21" evidence="2">
    <location>
        <begin position="1971"/>
        <end position="2063"/>
    </location>
</feature>
<feature type="domain" description="Olduvai 22" evidence="2">
    <location>
        <begin position="2064"/>
        <end position="2156"/>
    </location>
</feature>
<feature type="domain" description="Olduvai 23" evidence="2">
    <location>
        <begin position="2159"/>
        <end position="2214"/>
    </location>
</feature>
<feature type="domain" description="Olduvai 24" evidence="2">
    <location>
        <begin position="2215"/>
        <end position="2307"/>
    </location>
</feature>
<feature type="domain" description="Olduvai 25" evidence="2">
    <location>
        <begin position="2308"/>
        <end position="2400"/>
    </location>
</feature>
<feature type="domain" description="Olduvai 26" evidence="2">
    <location>
        <begin position="2403"/>
        <end position="2458"/>
    </location>
</feature>
<feature type="domain" description="Olduvai 27" evidence="2">
    <location>
        <begin position="2459"/>
        <end position="2551"/>
    </location>
</feature>
<feature type="domain" description="Olduvai 28" evidence="2">
    <location>
        <begin position="2552"/>
        <end position="2644"/>
    </location>
</feature>
<feature type="domain" description="Olduvai 29" evidence="2">
    <location>
        <begin position="2647"/>
        <end position="2702"/>
    </location>
</feature>
<feature type="domain" description="Olduvai 30" evidence="2">
    <location>
        <begin position="2703"/>
        <end position="2795"/>
    </location>
</feature>
<feature type="domain" description="Olduvai 31" evidence="2">
    <location>
        <begin position="2796"/>
        <end position="2888"/>
    </location>
</feature>
<feature type="domain" description="Olduvai 32" evidence="2">
    <location>
        <begin position="2891"/>
        <end position="2946"/>
    </location>
</feature>
<feature type="domain" description="Olduvai 33" evidence="2">
    <location>
        <begin position="2947"/>
        <end position="3039"/>
    </location>
</feature>
<feature type="domain" description="Olduvai 34" evidence="2">
    <location>
        <begin position="3040"/>
        <end position="3132"/>
    </location>
</feature>
<feature type="domain" description="Olduvai 35" evidence="2">
    <location>
        <begin position="3135"/>
        <end position="3190"/>
    </location>
</feature>
<feature type="domain" description="Olduvai 36" evidence="2">
    <location>
        <begin position="3191"/>
        <end position="3283"/>
    </location>
</feature>
<feature type="domain" description="Olduvai 37" evidence="2">
    <location>
        <begin position="3284"/>
        <end position="3376"/>
    </location>
</feature>
<feature type="domain" description="Olduvai 38" evidence="2">
    <location>
        <begin position="3379"/>
        <end position="3434"/>
    </location>
</feature>
<feature type="domain" description="Olduvai 39" evidence="2">
    <location>
        <begin position="3435"/>
        <end position="3527"/>
    </location>
</feature>
<feature type="domain" description="Olduvai 40" evidence="2">
    <location>
        <begin position="3528"/>
        <end position="3620"/>
    </location>
</feature>
<feature type="domain" description="Olduvai 41" evidence="2">
    <location>
        <begin position="3623"/>
        <end position="3696"/>
    </location>
</feature>
<feature type="domain" description="Olduvai 42" evidence="2">
    <location>
        <begin position="3697"/>
        <end position="3795"/>
    </location>
</feature>
<feature type="region of interest" description="Disordered" evidence="3">
    <location>
        <begin position="161"/>
        <end position="200"/>
    </location>
</feature>
<feature type="region of interest" description="Disordered" evidence="3">
    <location>
        <begin position="451"/>
        <end position="475"/>
    </location>
</feature>
<feature type="region of interest" description="Disordered" evidence="3">
    <location>
        <begin position="520"/>
        <end position="566"/>
    </location>
</feature>
<feature type="region of interest" description="Disordered" evidence="3">
    <location>
        <begin position="830"/>
        <end position="868"/>
    </location>
</feature>
<feature type="region of interest" description="Disordered" evidence="3">
    <location>
        <begin position="1073"/>
        <end position="1109"/>
    </location>
</feature>
<feature type="region of interest" description="Disordered" evidence="3">
    <location>
        <begin position="1242"/>
        <end position="1261"/>
    </location>
</feature>
<feature type="region of interest" description="Disordered" evidence="3">
    <location>
        <begin position="1318"/>
        <end position="1353"/>
    </location>
</feature>
<feature type="region of interest" description="Disordered" evidence="3">
    <location>
        <begin position="1562"/>
        <end position="1600"/>
    </location>
</feature>
<feature type="region of interest" description="Disordered" evidence="3">
    <location>
        <begin position="1806"/>
        <end position="1844"/>
    </location>
</feature>
<feature type="region of interest" description="Disordered" evidence="3">
    <location>
        <begin position="2050"/>
        <end position="2088"/>
    </location>
</feature>
<feature type="region of interest" description="Disordered" evidence="3">
    <location>
        <begin position="2294"/>
        <end position="2332"/>
    </location>
</feature>
<feature type="region of interest" description="Disordered" evidence="3">
    <location>
        <begin position="2538"/>
        <end position="2576"/>
    </location>
</feature>
<feature type="region of interest" description="Disordered" evidence="3">
    <location>
        <begin position="2782"/>
        <end position="2820"/>
    </location>
</feature>
<feature type="region of interest" description="Disordered" evidence="3">
    <location>
        <begin position="3026"/>
        <end position="3064"/>
    </location>
</feature>
<feature type="region of interest" description="Disordered" evidence="3">
    <location>
        <begin position="3194"/>
        <end position="3213"/>
    </location>
</feature>
<feature type="region of interest" description="Disordered" evidence="3">
    <location>
        <begin position="3270"/>
        <end position="3308"/>
    </location>
</feature>
<feature type="region of interest" description="Disordered" evidence="3">
    <location>
        <begin position="3514"/>
        <end position="3552"/>
    </location>
</feature>
<feature type="region of interest" description="Disordered" evidence="3">
    <location>
        <begin position="3684"/>
        <end position="3716"/>
    </location>
</feature>
<feature type="coiled-coil region" evidence="1">
    <location>
        <begin position="75"/>
        <end position="119"/>
    </location>
</feature>
<feature type="coiled-coil region" evidence="1">
    <location>
        <begin position="346"/>
        <end position="390"/>
    </location>
</feature>
<feature type="compositionally biased region" description="Acidic residues" evidence="3">
    <location>
        <begin position="165"/>
        <end position="177"/>
    </location>
</feature>
<feature type="compositionally biased region" description="Basic and acidic residues" evidence="3">
    <location>
        <begin position="190"/>
        <end position="200"/>
    </location>
</feature>
<feature type="compositionally biased region" description="Acidic residues" evidence="3">
    <location>
        <begin position="530"/>
        <end position="539"/>
    </location>
</feature>
<feature type="compositionally biased region" description="Acidic residues" evidence="3">
    <location>
        <begin position="550"/>
        <end position="562"/>
    </location>
</feature>
<feature type="compositionally biased region" description="Basic residues" evidence="3">
    <location>
        <begin position="831"/>
        <end position="849"/>
    </location>
</feature>
<feature type="compositionally biased region" description="Basic residues" evidence="3">
    <location>
        <begin position="1075"/>
        <end position="1093"/>
    </location>
</feature>
<feature type="compositionally biased region" description="Basic residues" evidence="3">
    <location>
        <begin position="1319"/>
        <end position="1337"/>
    </location>
</feature>
<feature type="compositionally biased region" description="Basic residues" evidence="3">
    <location>
        <begin position="1563"/>
        <end position="1581"/>
    </location>
</feature>
<feature type="compositionally biased region" description="Basic residues" evidence="3">
    <location>
        <begin position="1807"/>
        <end position="1825"/>
    </location>
</feature>
<feature type="compositionally biased region" description="Basic residues" evidence="3">
    <location>
        <begin position="2051"/>
        <end position="2069"/>
    </location>
</feature>
<feature type="compositionally biased region" description="Basic residues" evidence="3">
    <location>
        <begin position="2295"/>
        <end position="2313"/>
    </location>
</feature>
<feature type="compositionally biased region" description="Basic residues" evidence="3">
    <location>
        <begin position="2539"/>
        <end position="2557"/>
    </location>
</feature>
<feature type="compositionally biased region" description="Basic residues" evidence="3">
    <location>
        <begin position="2783"/>
        <end position="2801"/>
    </location>
</feature>
<feature type="compositionally biased region" description="Basic residues" evidence="3">
    <location>
        <begin position="3027"/>
        <end position="3045"/>
    </location>
</feature>
<feature type="compositionally biased region" description="Basic residues" evidence="3">
    <location>
        <begin position="3271"/>
        <end position="3289"/>
    </location>
</feature>
<feature type="compositionally biased region" description="Basic residues" evidence="3">
    <location>
        <begin position="3515"/>
        <end position="3533"/>
    </location>
</feature>
<feature type="compositionally biased region" description="Basic residues" evidence="3">
    <location>
        <begin position="3684"/>
        <end position="3702"/>
    </location>
</feature>
<organism>
    <name type="scientific">Homo sapiens</name>
    <name type="common">Human</name>
    <dbReference type="NCBI Taxonomy" id="9606"/>
    <lineage>
        <taxon>Eukaryota</taxon>
        <taxon>Metazoa</taxon>
        <taxon>Chordata</taxon>
        <taxon>Craniata</taxon>
        <taxon>Vertebrata</taxon>
        <taxon>Euteleostomi</taxon>
        <taxon>Mammalia</taxon>
        <taxon>Eutheria</taxon>
        <taxon>Euarchontoglires</taxon>
        <taxon>Primates</taxon>
        <taxon>Haplorrhini</taxon>
        <taxon>Catarrhini</taxon>
        <taxon>Hominidae</taxon>
        <taxon>Homo</taxon>
    </lineage>
</organism>
<reference key="1">
    <citation type="journal article" date="2006" name="Nature">
        <title>The DNA sequence and biological annotation of human chromosome 1.</title>
        <authorList>
            <person name="Gregory S.G."/>
            <person name="Barlow K.F."/>
            <person name="McLay K.E."/>
            <person name="Kaul R."/>
            <person name="Swarbreck D."/>
            <person name="Dunham A."/>
            <person name="Scott C.E."/>
            <person name="Howe K.L."/>
            <person name="Woodfine K."/>
            <person name="Spencer C.C.A."/>
            <person name="Jones M.C."/>
            <person name="Gillson C."/>
            <person name="Searle S."/>
            <person name="Zhou Y."/>
            <person name="Kokocinski F."/>
            <person name="McDonald L."/>
            <person name="Evans R."/>
            <person name="Phillips K."/>
            <person name="Atkinson A."/>
            <person name="Cooper R."/>
            <person name="Jones C."/>
            <person name="Hall R.E."/>
            <person name="Andrews T.D."/>
            <person name="Lloyd C."/>
            <person name="Ainscough R."/>
            <person name="Almeida J.P."/>
            <person name="Ambrose K.D."/>
            <person name="Anderson F."/>
            <person name="Andrew R.W."/>
            <person name="Ashwell R.I.S."/>
            <person name="Aubin K."/>
            <person name="Babbage A.K."/>
            <person name="Bagguley C.L."/>
            <person name="Bailey J."/>
            <person name="Beasley H."/>
            <person name="Bethel G."/>
            <person name="Bird C.P."/>
            <person name="Bray-Allen S."/>
            <person name="Brown J.Y."/>
            <person name="Brown A.J."/>
            <person name="Buckley D."/>
            <person name="Burton J."/>
            <person name="Bye J."/>
            <person name="Carder C."/>
            <person name="Chapman J.C."/>
            <person name="Clark S.Y."/>
            <person name="Clarke G."/>
            <person name="Clee C."/>
            <person name="Cobley V."/>
            <person name="Collier R.E."/>
            <person name="Corby N."/>
            <person name="Coville G.J."/>
            <person name="Davies J."/>
            <person name="Deadman R."/>
            <person name="Dunn M."/>
            <person name="Earthrowl M."/>
            <person name="Ellington A.G."/>
            <person name="Errington H."/>
            <person name="Frankish A."/>
            <person name="Frankland J."/>
            <person name="French L."/>
            <person name="Garner P."/>
            <person name="Garnett J."/>
            <person name="Gay L."/>
            <person name="Ghori M.R.J."/>
            <person name="Gibson R."/>
            <person name="Gilby L.M."/>
            <person name="Gillett W."/>
            <person name="Glithero R.J."/>
            <person name="Grafham D.V."/>
            <person name="Griffiths C."/>
            <person name="Griffiths-Jones S."/>
            <person name="Grocock R."/>
            <person name="Hammond S."/>
            <person name="Harrison E.S.I."/>
            <person name="Hart E."/>
            <person name="Haugen E."/>
            <person name="Heath P.D."/>
            <person name="Holmes S."/>
            <person name="Holt K."/>
            <person name="Howden P.J."/>
            <person name="Hunt A.R."/>
            <person name="Hunt S.E."/>
            <person name="Hunter G."/>
            <person name="Isherwood J."/>
            <person name="James R."/>
            <person name="Johnson C."/>
            <person name="Johnson D."/>
            <person name="Joy A."/>
            <person name="Kay M."/>
            <person name="Kershaw J.K."/>
            <person name="Kibukawa M."/>
            <person name="Kimberley A.M."/>
            <person name="King A."/>
            <person name="Knights A.J."/>
            <person name="Lad H."/>
            <person name="Laird G."/>
            <person name="Lawlor S."/>
            <person name="Leongamornlert D.A."/>
            <person name="Lloyd D.M."/>
            <person name="Loveland J."/>
            <person name="Lovell J."/>
            <person name="Lush M.J."/>
            <person name="Lyne R."/>
            <person name="Martin S."/>
            <person name="Mashreghi-Mohammadi M."/>
            <person name="Matthews L."/>
            <person name="Matthews N.S.W."/>
            <person name="McLaren S."/>
            <person name="Milne S."/>
            <person name="Mistry S."/>
            <person name="Moore M.J.F."/>
            <person name="Nickerson T."/>
            <person name="O'Dell C.N."/>
            <person name="Oliver K."/>
            <person name="Palmeiri A."/>
            <person name="Palmer S.A."/>
            <person name="Parker A."/>
            <person name="Patel D."/>
            <person name="Pearce A.V."/>
            <person name="Peck A.I."/>
            <person name="Pelan S."/>
            <person name="Phelps K."/>
            <person name="Phillimore B.J."/>
            <person name="Plumb R."/>
            <person name="Rajan J."/>
            <person name="Raymond C."/>
            <person name="Rouse G."/>
            <person name="Saenphimmachak C."/>
            <person name="Sehra H.K."/>
            <person name="Sheridan E."/>
            <person name="Shownkeen R."/>
            <person name="Sims S."/>
            <person name="Skuce C.D."/>
            <person name="Smith M."/>
            <person name="Steward C."/>
            <person name="Subramanian S."/>
            <person name="Sycamore N."/>
            <person name="Tracey A."/>
            <person name="Tromans A."/>
            <person name="Van Helmond Z."/>
            <person name="Wall M."/>
            <person name="Wallis J.M."/>
            <person name="White S."/>
            <person name="Whitehead S.L."/>
            <person name="Wilkinson J.E."/>
            <person name="Willey D.L."/>
            <person name="Williams H."/>
            <person name="Wilming L."/>
            <person name="Wray P.W."/>
            <person name="Wu Z."/>
            <person name="Coulson A."/>
            <person name="Vaudin M."/>
            <person name="Sulston J.E."/>
            <person name="Durbin R.M."/>
            <person name="Hubbard T."/>
            <person name="Wooster R."/>
            <person name="Dunham I."/>
            <person name="Carter N.P."/>
            <person name="McVean G."/>
            <person name="Ross M.T."/>
            <person name="Harrow J."/>
            <person name="Olson M.V."/>
            <person name="Beck S."/>
            <person name="Rogers J."/>
            <person name="Bentley D.R."/>
        </authorList>
    </citation>
    <scope>NUCLEOTIDE SEQUENCE [LARGE SCALE GENOMIC DNA]</scope>
</reference>
<gene>
    <name evidence="5" type="primary">NBPF10</name>
</gene>
<dbReference type="EMBL" id="AC239799">
    <property type="status" value="NOT_ANNOTATED_CDS"/>
    <property type="molecule type" value="Genomic_DNA"/>
</dbReference>
<dbReference type="CCDS" id="CCDS76206.1"/>
<dbReference type="RefSeq" id="NP_001289300.1">
    <property type="nucleotide sequence ID" value="NM_001302371.3"/>
</dbReference>
<dbReference type="SMR" id="Q6P3W6"/>
<dbReference type="FunCoup" id="Q6P3W6">
    <property type="interactions" value="3"/>
</dbReference>
<dbReference type="IntAct" id="Q6P3W6">
    <property type="interactions" value="1"/>
</dbReference>
<dbReference type="MINT" id="Q6P3W6"/>
<dbReference type="STRING" id="9606.ENSP00000463957"/>
<dbReference type="GlyGen" id="Q6P3W6">
    <property type="glycosylation" value="1 site"/>
</dbReference>
<dbReference type="iPTMnet" id="Q6P3W6"/>
<dbReference type="PhosphoSitePlus" id="Q6P3W6"/>
<dbReference type="BioMuta" id="NBPF10"/>
<dbReference type="DMDM" id="152123240"/>
<dbReference type="jPOST" id="Q6P3W6"/>
<dbReference type="MassIVE" id="Q6P3W6"/>
<dbReference type="PaxDb" id="9606-ENSP00000463957"/>
<dbReference type="PeptideAtlas" id="Q6P3W6"/>
<dbReference type="Antibodypedia" id="75607">
    <property type="antibodies" value="15 antibodies from 4 providers"/>
</dbReference>
<dbReference type="DNASU" id="100132406"/>
<dbReference type="Ensembl" id="ENST00000583866.9">
    <property type="protein sequence ID" value="ENSP00000463957.6"/>
    <property type="gene ID" value="ENSG00000271425.9"/>
</dbReference>
<dbReference type="GeneID" id="100132406"/>
<dbReference type="KEGG" id="hsa:100132406"/>
<dbReference type="MANE-Select" id="ENST00000583866.9">
    <property type="protein sequence ID" value="ENSP00000463957.6"/>
    <property type="RefSeq nucleotide sequence ID" value="NM_001302371.3"/>
    <property type="RefSeq protein sequence ID" value="NP_001289300.1"/>
</dbReference>
<dbReference type="AGR" id="HGNC:31992"/>
<dbReference type="CTD" id="100132406"/>
<dbReference type="DisGeNET" id="100132406"/>
<dbReference type="GeneCards" id="NBPF10"/>
<dbReference type="HGNC" id="HGNC:31992">
    <property type="gene designation" value="NBPF10"/>
</dbReference>
<dbReference type="HPA" id="ENSG00000271425">
    <property type="expression patterns" value="Low tissue specificity"/>
</dbReference>
<dbReference type="MIM" id="614000">
    <property type="type" value="gene"/>
</dbReference>
<dbReference type="neXtProt" id="NX_Q6P3W6"/>
<dbReference type="OpenTargets" id="ENSG00000271425"/>
<dbReference type="VEuPathDB" id="HostDB:ENSG00000271425"/>
<dbReference type="eggNOG" id="ENOG502RU1I">
    <property type="taxonomic scope" value="Eukaryota"/>
</dbReference>
<dbReference type="GeneTree" id="ENSGT00420000029746"/>
<dbReference type="HOGENOM" id="CLU_224329_0_0_1"/>
<dbReference type="InParanoid" id="Q6P3W6"/>
<dbReference type="PAN-GO" id="Q6P3W6">
    <property type="GO annotations" value="0 GO annotations based on evolutionary models"/>
</dbReference>
<dbReference type="PathwayCommons" id="Q6P3W6"/>
<dbReference type="BioGRID-ORCS" id="100132406">
    <property type="hits" value="40 hits in 234 CRISPR screens"/>
</dbReference>
<dbReference type="ChiTaRS" id="NBPF10">
    <property type="organism name" value="human"/>
</dbReference>
<dbReference type="GenomeRNAi" id="100132406"/>
<dbReference type="Pharos" id="Q6P3W6">
    <property type="development level" value="Tdark"/>
</dbReference>
<dbReference type="PRO" id="PR:Q6P3W6"/>
<dbReference type="Proteomes" id="UP000005640">
    <property type="component" value="Chromosome 1"/>
</dbReference>
<dbReference type="RNAct" id="Q6P3W6">
    <property type="molecule type" value="protein"/>
</dbReference>
<dbReference type="Bgee" id="ENSG00000271425">
    <property type="expression patterns" value="Expressed in nipple and 215 other cell types or tissues"/>
</dbReference>
<dbReference type="GO" id="GO:0005737">
    <property type="term" value="C:cytoplasm"/>
    <property type="evidence" value="ECO:0007669"/>
    <property type="project" value="UniProtKB-SubCell"/>
</dbReference>
<dbReference type="GO" id="GO:0003723">
    <property type="term" value="F:RNA binding"/>
    <property type="evidence" value="ECO:0007005"/>
    <property type="project" value="UniProtKB"/>
</dbReference>
<dbReference type="InterPro" id="IPR055306">
    <property type="entry name" value="NBPF"/>
</dbReference>
<dbReference type="InterPro" id="IPR010630">
    <property type="entry name" value="Olduvai_dom"/>
</dbReference>
<dbReference type="PANTHER" id="PTHR14199:SF35">
    <property type="entry name" value="NEUROBLASTOMA BREAKPOINT FAMILY MEMBER 1-RELATED"/>
    <property type="match status" value="1"/>
</dbReference>
<dbReference type="PANTHER" id="PTHR14199">
    <property type="entry name" value="NEUROBLASTOMA BREAKPOINT FAMILY MEMBER 6-LIKE PROTEIN"/>
    <property type="match status" value="1"/>
</dbReference>
<dbReference type="Pfam" id="PF06758">
    <property type="entry name" value="Olduvai"/>
    <property type="match status" value="42"/>
</dbReference>
<dbReference type="SMART" id="SM01148">
    <property type="entry name" value="DUF1220"/>
    <property type="match status" value="42"/>
</dbReference>
<dbReference type="PROSITE" id="PS51316">
    <property type="entry name" value="ODV"/>
    <property type="match status" value="42"/>
</dbReference>
<comment type="subcellular location">
    <subcellularLocation>
        <location evidence="4">Cytoplasm</location>
    </subcellularLocation>
</comment>
<comment type="similarity">
    <text evidence="4">Belongs to the NBPF family.</text>
</comment>
<accession>Q6P3W6</accession>
<accession>A0A075B762</accession>
<accession>Q5RHC0</accession>
<accession>Q9NWN6</accession>